<reference key="1">
    <citation type="journal article" date="2003" name="Mol. Microbiol.">
        <title>Genome-based analysis of virulence genes in a non-biofilm-forming Staphylococcus epidermidis strain (ATCC 12228).</title>
        <authorList>
            <person name="Zhang Y.-Q."/>
            <person name="Ren S.-X."/>
            <person name="Li H.-L."/>
            <person name="Wang Y.-X."/>
            <person name="Fu G."/>
            <person name="Yang J."/>
            <person name="Qin Z.-Q."/>
            <person name="Miao Y.-G."/>
            <person name="Wang W.-Y."/>
            <person name="Chen R.-S."/>
            <person name="Shen Y."/>
            <person name="Chen Z."/>
            <person name="Yuan Z.-H."/>
            <person name="Zhao G.-P."/>
            <person name="Qu D."/>
            <person name="Danchin A."/>
            <person name="Wen Y.-M."/>
        </authorList>
    </citation>
    <scope>NUCLEOTIDE SEQUENCE [LARGE SCALE GENOMIC DNA]</scope>
    <source>
        <strain>ATCC 12228 / FDA PCI 1200</strain>
    </source>
</reference>
<gene>
    <name evidence="1" type="primary">rpoC</name>
    <name type="ordered locus">SE_0307</name>
</gene>
<feature type="chain" id="PRO_0000067799" description="DNA-directed RNA polymerase subunit beta'">
    <location>
        <begin position="1"/>
        <end position="1207"/>
    </location>
</feature>
<feature type="binding site" evidence="1">
    <location>
        <position position="60"/>
    </location>
    <ligand>
        <name>Zn(2+)</name>
        <dbReference type="ChEBI" id="CHEBI:29105"/>
        <label>1</label>
    </ligand>
</feature>
<feature type="binding site" evidence="1">
    <location>
        <position position="62"/>
    </location>
    <ligand>
        <name>Zn(2+)</name>
        <dbReference type="ChEBI" id="CHEBI:29105"/>
        <label>1</label>
    </ligand>
</feature>
<feature type="binding site" evidence="1">
    <location>
        <position position="75"/>
    </location>
    <ligand>
        <name>Zn(2+)</name>
        <dbReference type="ChEBI" id="CHEBI:29105"/>
        <label>1</label>
    </ligand>
</feature>
<feature type="binding site" evidence="1">
    <location>
        <position position="78"/>
    </location>
    <ligand>
        <name>Zn(2+)</name>
        <dbReference type="ChEBI" id="CHEBI:29105"/>
        <label>1</label>
    </ligand>
</feature>
<feature type="binding site" evidence="1">
    <location>
        <position position="449"/>
    </location>
    <ligand>
        <name>Mg(2+)</name>
        <dbReference type="ChEBI" id="CHEBI:18420"/>
    </ligand>
</feature>
<feature type="binding site" evidence="1">
    <location>
        <position position="451"/>
    </location>
    <ligand>
        <name>Mg(2+)</name>
        <dbReference type="ChEBI" id="CHEBI:18420"/>
    </ligand>
</feature>
<feature type="binding site" evidence="1">
    <location>
        <position position="453"/>
    </location>
    <ligand>
        <name>Mg(2+)</name>
        <dbReference type="ChEBI" id="CHEBI:18420"/>
    </ligand>
</feature>
<feature type="binding site" evidence="1">
    <location>
        <position position="822"/>
    </location>
    <ligand>
        <name>Zn(2+)</name>
        <dbReference type="ChEBI" id="CHEBI:29105"/>
        <label>2</label>
    </ligand>
</feature>
<feature type="binding site" evidence="1">
    <location>
        <position position="896"/>
    </location>
    <ligand>
        <name>Zn(2+)</name>
        <dbReference type="ChEBI" id="CHEBI:29105"/>
        <label>2</label>
    </ligand>
</feature>
<feature type="binding site" evidence="1">
    <location>
        <position position="903"/>
    </location>
    <ligand>
        <name>Zn(2+)</name>
        <dbReference type="ChEBI" id="CHEBI:29105"/>
        <label>2</label>
    </ligand>
</feature>
<feature type="binding site" evidence="1">
    <location>
        <position position="906"/>
    </location>
    <ligand>
        <name>Zn(2+)</name>
        <dbReference type="ChEBI" id="CHEBI:29105"/>
        <label>2</label>
    </ligand>
</feature>
<protein>
    <recommendedName>
        <fullName evidence="1">DNA-directed RNA polymerase subunit beta'</fullName>
        <shortName evidence="1">RNAP subunit beta'</shortName>
        <ecNumber evidence="1">2.7.7.6</ecNumber>
    </recommendedName>
    <alternativeName>
        <fullName evidence="1">RNA polymerase subunit beta'</fullName>
    </alternativeName>
    <alternativeName>
        <fullName evidence="1">Transcriptase subunit beta'</fullName>
    </alternativeName>
</protein>
<name>RPOC_STAES</name>
<sequence>MIDVNNFHYMKIGLASPEKIRSWSYGEVKKPETINYRTLKPEKDGLFCERIFGPTKDWECSCGKYKRVRYKGMVCDRCGVEVTKSKVRRERMGHIELAAPVSHIWYFKGIPSRMGLLLDMSPRALEEVIYFASYVVVDPGPTGLEKKTLLSEAEFREYYDKYPNQFVAKMGAEGIKDLLEEIDLDEELKELRDELESATGQRLTRAIKRLEVVESFRNSGNNPSWMILDVLPIIPPEIRPMVQLDGGRFATSDLNDLYRRVINRNNRLKRLLDLGAPGIIVQNEKRMLQEAVDALIDNGRRGRPVTGPGNRPLKSLSHMLKGKQGRFRQNLLGKRVDYSGRSVIAVGPSLKMYQCGLPKEMALELFKPFVMKELVQREIATNIKNAKSKIERMDDEVWDVLEDVITEHPVLLNRAPTLHRLGIQAFEPTLVEGRAIRLHPLVTTAYNADFDGDQMAVHVPLSKEAQAEARMLMLAAQNILNPKDGKPVVTPSQDMVLGNYYLTLERKDAVNTGAIFNDTNEVLKAYANGYVHLHTRIGVHANSFNNPTFTDEQNSKILATSVGKIIFNEIIPDSFAYINEPSQANLERTTPDKYFVDPTQLGEGGLKEYFDNTELIEPFNKKFLGNIIAEVFNRFSITDTSMMLDRMKDLGFKFSSKAGITVGVSDIVVLPDKQDILDEHEKLVERVTKQYNRGLITEDERYNAVVEIWTDAKDQIQGELMQSLEKTNPIFMMSDSGARGNASNFTQLAGMRGLMAAPSGKIIELPITSSFREGLTVLEYFISTHGARKGLADTALKTADSGYLTRRLVDVAQDVIVREEDCGTDRGLLVSDIKEGTEMIEPFIERIEGRYSKETIRHPETDEVIIRPDELITPDIAKQITDAGIEQMYIRSAFTCNTRHGVCEKCYGKNLATGEKVEVGEAVGTIAAQSIGEPGTQLTMRTFHTGGVAGSDITQGLPRIQEIFEARNPKGQAVITEIEGVVDDIKLAKDRQQEIIVKGANETRSYLASGTSRLKVEIGQSVERGEVLTEGSIEPKNYLSVAGLNATESYLLKEVQKVYRMQGVEIDDKHVEVMVRQMLRKVRIIEAGDTKLLPGSLVDIHNFTDANRDAFKHRKRPATAKPVLLGITKASLETESFLSAASFQETTRVLTDAAIKGKRDDLLGLKENVIIGKLIPAGTGMRRYSDIQYDKATAPVTETSEEVETIE</sequence>
<dbReference type="EC" id="2.7.7.6" evidence="1"/>
<dbReference type="EMBL" id="AE015929">
    <property type="protein sequence ID" value="AAO03904.1"/>
    <property type="molecule type" value="Genomic_DNA"/>
</dbReference>
<dbReference type="RefSeq" id="NP_763862.1">
    <property type="nucleotide sequence ID" value="NC_004461.1"/>
</dbReference>
<dbReference type="SMR" id="Q8CQ83"/>
<dbReference type="KEGG" id="sep:SE_0307"/>
<dbReference type="PATRIC" id="fig|176280.10.peg.282"/>
<dbReference type="eggNOG" id="COG0086">
    <property type="taxonomic scope" value="Bacteria"/>
</dbReference>
<dbReference type="HOGENOM" id="CLU_000524_3_1_9"/>
<dbReference type="OrthoDB" id="9815296at2"/>
<dbReference type="Proteomes" id="UP000001411">
    <property type="component" value="Chromosome"/>
</dbReference>
<dbReference type="GO" id="GO:0000428">
    <property type="term" value="C:DNA-directed RNA polymerase complex"/>
    <property type="evidence" value="ECO:0007669"/>
    <property type="project" value="UniProtKB-KW"/>
</dbReference>
<dbReference type="GO" id="GO:0003677">
    <property type="term" value="F:DNA binding"/>
    <property type="evidence" value="ECO:0007669"/>
    <property type="project" value="UniProtKB-UniRule"/>
</dbReference>
<dbReference type="GO" id="GO:0003899">
    <property type="term" value="F:DNA-directed RNA polymerase activity"/>
    <property type="evidence" value="ECO:0007669"/>
    <property type="project" value="UniProtKB-UniRule"/>
</dbReference>
<dbReference type="GO" id="GO:0000287">
    <property type="term" value="F:magnesium ion binding"/>
    <property type="evidence" value="ECO:0007669"/>
    <property type="project" value="UniProtKB-UniRule"/>
</dbReference>
<dbReference type="GO" id="GO:0008270">
    <property type="term" value="F:zinc ion binding"/>
    <property type="evidence" value="ECO:0007669"/>
    <property type="project" value="UniProtKB-UniRule"/>
</dbReference>
<dbReference type="GO" id="GO:0006351">
    <property type="term" value="P:DNA-templated transcription"/>
    <property type="evidence" value="ECO:0007669"/>
    <property type="project" value="UniProtKB-UniRule"/>
</dbReference>
<dbReference type="CDD" id="cd02655">
    <property type="entry name" value="RNAP_beta'_C"/>
    <property type="match status" value="1"/>
</dbReference>
<dbReference type="CDD" id="cd01609">
    <property type="entry name" value="RNAP_beta'_N"/>
    <property type="match status" value="1"/>
</dbReference>
<dbReference type="FunFam" id="1.10.132.30:FF:000003">
    <property type="entry name" value="DNA-directed RNA polymerase subunit beta"/>
    <property type="match status" value="1"/>
</dbReference>
<dbReference type="FunFam" id="1.10.150.390:FF:000002">
    <property type="entry name" value="DNA-directed RNA polymerase subunit beta"/>
    <property type="match status" value="1"/>
</dbReference>
<dbReference type="FunFam" id="4.10.860.120:FF:000001">
    <property type="entry name" value="DNA-directed RNA polymerase subunit beta"/>
    <property type="match status" value="1"/>
</dbReference>
<dbReference type="Gene3D" id="1.10.132.30">
    <property type="match status" value="1"/>
</dbReference>
<dbReference type="Gene3D" id="1.10.150.390">
    <property type="match status" value="1"/>
</dbReference>
<dbReference type="Gene3D" id="1.10.1790.20">
    <property type="match status" value="1"/>
</dbReference>
<dbReference type="Gene3D" id="1.10.40.90">
    <property type="match status" value="1"/>
</dbReference>
<dbReference type="Gene3D" id="2.40.40.20">
    <property type="match status" value="1"/>
</dbReference>
<dbReference type="Gene3D" id="2.40.50.100">
    <property type="match status" value="1"/>
</dbReference>
<dbReference type="Gene3D" id="4.10.860.120">
    <property type="entry name" value="RNA polymerase II, clamp domain"/>
    <property type="match status" value="1"/>
</dbReference>
<dbReference type="Gene3D" id="1.10.274.100">
    <property type="entry name" value="RNA polymerase Rpb1, domain 3"/>
    <property type="match status" value="1"/>
</dbReference>
<dbReference type="HAMAP" id="MF_01322">
    <property type="entry name" value="RNApol_bact_RpoC"/>
    <property type="match status" value="1"/>
</dbReference>
<dbReference type="InterPro" id="IPR045867">
    <property type="entry name" value="DNA-dir_RpoC_beta_prime"/>
</dbReference>
<dbReference type="InterPro" id="IPR012754">
    <property type="entry name" value="DNA-dir_RpoC_beta_prime_bact"/>
</dbReference>
<dbReference type="InterPro" id="IPR000722">
    <property type="entry name" value="RNA_pol_asu"/>
</dbReference>
<dbReference type="InterPro" id="IPR006592">
    <property type="entry name" value="RNA_pol_N"/>
</dbReference>
<dbReference type="InterPro" id="IPR007080">
    <property type="entry name" value="RNA_pol_Rpb1_1"/>
</dbReference>
<dbReference type="InterPro" id="IPR007066">
    <property type="entry name" value="RNA_pol_Rpb1_3"/>
</dbReference>
<dbReference type="InterPro" id="IPR042102">
    <property type="entry name" value="RNA_pol_Rpb1_3_sf"/>
</dbReference>
<dbReference type="InterPro" id="IPR007083">
    <property type="entry name" value="RNA_pol_Rpb1_4"/>
</dbReference>
<dbReference type="InterPro" id="IPR007081">
    <property type="entry name" value="RNA_pol_Rpb1_5"/>
</dbReference>
<dbReference type="InterPro" id="IPR044893">
    <property type="entry name" value="RNA_pol_Rpb1_clamp_domain"/>
</dbReference>
<dbReference type="InterPro" id="IPR038120">
    <property type="entry name" value="Rpb1_funnel_sf"/>
</dbReference>
<dbReference type="NCBIfam" id="TIGR02386">
    <property type="entry name" value="rpoC_TIGR"/>
    <property type="match status" value="1"/>
</dbReference>
<dbReference type="PANTHER" id="PTHR19376">
    <property type="entry name" value="DNA-DIRECTED RNA POLYMERASE"/>
    <property type="match status" value="1"/>
</dbReference>
<dbReference type="PANTHER" id="PTHR19376:SF54">
    <property type="entry name" value="DNA-DIRECTED RNA POLYMERASE SUBUNIT BETA"/>
    <property type="match status" value="1"/>
</dbReference>
<dbReference type="Pfam" id="PF04997">
    <property type="entry name" value="RNA_pol_Rpb1_1"/>
    <property type="match status" value="1"/>
</dbReference>
<dbReference type="Pfam" id="PF00623">
    <property type="entry name" value="RNA_pol_Rpb1_2"/>
    <property type="match status" value="1"/>
</dbReference>
<dbReference type="Pfam" id="PF04983">
    <property type="entry name" value="RNA_pol_Rpb1_3"/>
    <property type="match status" value="1"/>
</dbReference>
<dbReference type="Pfam" id="PF05000">
    <property type="entry name" value="RNA_pol_Rpb1_4"/>
    <property type="match status" value="1"/>
</dbReference>
<dbReference type="Pfam" id="PF04998">
    <property type="entry name" value="RNA_pol_Rpb1_5"/>
    <property type="match status" value="1"/>
</dbReference>
<dbReference type="SMART" id="SM00663">
    <property type="entry name" value="RPOLA_N"/>
    <property type="match status" value="1"/>
</dbReference>
<dbReference type="SUPFAM" id="SSF64484">
    <property type="entry name" value="beta and beta-prime subunits of DNA dependent RNA-polymerase"/>
    <property type="match status" value="1"/>
</dbReference>
<organism>
    <name type="scientific">Staphylococcus epidermidis (strain ATCC 12228 / FDA PCI 1200)</name>
    <dbReference type="NCBI Taxonomy" id="176280"/>
    <lineage>
        <taxon>Bacteria</taxon>
        <taxon>Bacillati</taxon>
        <taxon>Bacillota</taxon>
        <taxon>Bacilli</taxon>
        <taxon>Bacillales</taxon>
        <taxon>Staphylococcaceae</taxon>
        <taxon>Staphylococcus</taxon>
    </lineage>
</organism>
<evidence type="ECO:0000255" key="1">
    <source>
        <dbReference type="HAMAP-Rule" id="MF_01322"/>
    </source>
</evidence>
<keyword id="KW-0240">DNA-directed RNA polymerase</keyword>
<keyword id="KW-0460">Magnesium</keyword>
<keyword id="KW-0479">Metal-binding</keyword>
<keyword id="KW-0548">Nucleotidyltransferase</keyword>
<keyword id="KW-0804">Transcription</keyword>
<keyword id="KW-0808">Transferase</keyword>
<keyword id="KW-0862">Zinc</keyword>
<proteinExistence type="inferred from homology"/>
<accession>Q8CQ83</accession>
<comment type="function">
    <text evidence="1">DNA-dependent RNA polymerase catalyzes the transcription of DNA into RNA using the four ribonucleoside triphosphates as substrates.</text>
</comment>
<comment type="catalytic activity">
    <reaction evidence="1">
        <text>RNA(n) + a ribonucleoside 5'-triphosphate = RNA(n+1) + diphosphate</text>
        <dbReference type="Rhea" id="RHEA:21248"/>
        <dbReference type="Rhea" id="RHEA-COMP:14527"/>
        <dbReference type="Rhea" id="RHEA-COMP:17342"/>
        <dbReference type="ChEBI" id="CHEBI:33019"/>
        <dbReference type="ChEBI" id="CHEBI:61557"/>
        <dbReference type="ChEBI" id="CHEBI:140395"/>
        <dbReference type="EC" id="2.7.7.6"/>
    </reaction>
</comment>
<comment type="cofactor">
    <cofactor evidence="1">
        <name>Mg(2+)</name>
        <dbReference type="ChEBI" id="CHEBI:18420"/>
    </cofactor>
    <text evidence="1">Binds 1 Mg(2+) ion per subunit.</text>
</comment>
<comment type="cofactor">
    <cofactor evidence="1">
        <name>Zn(2+)</name>
        <dbReference type="ChEBI" id="CHEBI:29105"/>
    </cofactor>
    <text evidence="1">Binds 2 Zn(2+) ions per subunit.</text>
</comment>
<comment type="subunit">
    <text evidence="1">The RNAP catalytic core consists of 2 alpha, 1 beta, 1 beta' and 1 omega subunit. When a sigma factor is associated with the core the holoenzyme is formed, which can initiate transcription.</text>
</comment>
<comment type="similarity">
    <text evidence="1">Belongs to the RNA polymerase beta' chain family.</text>
</comment>